<sequence>MEGERKNNNKRWYFTREQLENSPSRRFGLDPDKELSNRQQAANLLQDMGQRLNVSQLTINTAIVYMHRFYMIQSFTQFHRNSVAPAALFLAAKVEEQPKKLEHVIKVAHTCLHPQESLPDTRSEAYLQQVQDLVILESIILQTLGFELTIDHPHTHVVKCTQLVRASKDLAQTSYFMATNSLHLTTFSLQYTPPVVACVCIHLACKWSNWEIPVSTDGKHWWEYVDATVTLELLDELTHEFLQILEKTPNRLKRIWNWRAWQADRKTKADDRGADENSSEQTILNMISQSSSDTTIAGLMSMSASSTTSAVPSLPATEDSKSNLSNVEMLSSERWLSSHPPFKVEPAQGYRKSENLALVGADHSLQQDGSNAFVSQKQNSKSVPSAKVSLKEYRAKHAEELAAQKRQLENMEANVKSQYAYAAQNLLSHHDSHSSVILKMPIEGSENPERPFLEKTDKTALKMRIPMTGGDKAASIKPEEIKMRIKVHTAADKHNSVDDSVTKNREHKEKHKTHPSNHHHHHNHHSHKHSHSQLPAGTGNKRLGDPKHSSQTSTLAHKPYSLSSSFSSSSSSRKRPLPEETGGVAYDHSTKTAKSAKSSSINFSFPPLPTMAQLPGHSSDTSGLHFSQPSCKTRVPHMKLDKSSTGANSHNTPQTTDYQDTVNMLNSLLNAQGVQPTQPPAFEYVHSYGEYMNPRAGGMSSRSGNTDKPRPPPLPSEPPPPLPPLPK</sequence>
<name>CCNT1_BOVIN</name>
<dbReference type="EMBL" id="AY428555">
    <property type="protein sequence ID" value="AAQ93805.1"/>
    <property type="molecule type" value="mRNA"/>
</dbReference>
<dbReference type="RefSeq" id="NP_001001147.1">
    <property type="nucleotide sequence ID" value="NM_001001147.1"/>
</dbReference>
<dbReference type="SMR" id="Q6T8E9"/>
<dbReference type="FunCoup" id="Q6T8E9">
    <property type="interactions" value="4150"/>
</dbReference>
<dbReference type="STRING" id="9913.ENSBTAP00000007703"/>
<dbReference type="PaxDb" id="9913-ENSBTAP00000007703"/>
<dbReference type="Ensembl" id="ENSBTAT00000007703.5">
    <property type="protein sequence ID" value="ENSBTAP00000007703.3"/>
    <property type="gene ID" value="ENSBTAG00000005861.6"/>
</dbReference>
<dbReference type="GeneID" id="407194"/>
<dbReference type="KEGG" id="bta:407194"/>
<dbReference type="CTD" id="904"/>
<dbReference type="VEuPathDB" id="HostDB:ENSBTAG00000005861"/>
<dbReference type="VGNC" id="VGNC:26978">
    <property type="gene designation" value="CCNT1"/>
</dbReference>
<dbReference type="eggNOG" id="KOG0834">
    <property type="taxonomic scope" value="Eukaryota"/>
</dbReference>
<dbReference type="GeneTree" id="ENSGT00940000159544"/>
<dbReference type="HOGENOM" id="CLU_012994_1_0_1"/>
<dbReference type="InParanoid" id="Q6T8E9"/>
<dbReference type="OMA" id="TWSGKGQ"/>
<dbReference type="OrthoDB" id="25002at2759"/>
<dbReference type="TreeFam" id="TF101014"/>
<dbReference type="Reactome" id="R-BTA-112382">
    <property type="pathway name" value="Formation of RNA Pol II elongation complex"/>
</dbReference>
<dbReference type="Reactome" id="R-BTA-2173796">
    <property type="pathway name" value="SMAD2/SMAD3:SMAD4 heterotrimer regulates transcription"/>
</dbReference>
<dbReference type="Reactome" id="R-BTA-674695">
    <property type="pathway name" value="RNA Polymerase II Pre-transcription Events"/>
</dbReference>
<dbReference type="Reactome" id="R-BTA-6796648">
    <property type="pathway name" value="TP53 Regulates Transcription of DNA Repair Genes"/>
</dbReference>
<dbReference type="Reactome" id="R-BTA-6807505">
    <property type="pathway name" value="RNA polymerase II transcribes snRNA genes"/>
</dbReference>
<dbReference type="Reactome" id="R-BTA-75955">
    <property type="pathway name" value="RNA Polymerase II Transcription Elongation"/>
</dbReference>
<dbReference type="Reactome" id="R-BTA-9018519">
    <property type="pathway name" value="Estrogen-dependent gene expression"/>
</dbReference>
<dbReference type="Proteomes" id="UP000009136">
    <property type="component" value="Chromosome 5"/>
</dbReference>
<dbReference type="Bgee" id="ENSBTAG00000005861">
    <property type="expression patterns" value="Expressed in neutrophil and 110 other cell types or tissues"/>
</dbReference>
<dbReference type="GO" id="GO:0008024">
    <property type="term" value="C:cyclin/CDK positive transcription elongation factor complex"/>
    <property type="evidence" value="ECO:0000250"/>
    <property type="project" value="UniProtKB"/>
</dbReference>
<dbReference type="GO" id="GO:0005829">
    <property type="term" value="C:cytosol"/>
    <property type="evidence" value="ECO:0007669"/>
    <property type="project" value="Ensembl"/>
</dbReference>
<dbReference type="GO" id="GO:0005634">
    <property type="term" value="C:nucleus"/>
    <property type="evidence" value="ECO:0000250"/>
    <property type="project" value="UniProtKB"/>
</dbReference>
<dbReference type="GO" id="GO:0070691">
    <property type="term" value="C:P-TEFb complex"/>
    <property type="evidence" value="ECO:0000250"/>
    <property type="project" value="UniProtKB"/>
</dbReference>
<dbReference type="GO" id="GO:0097322">
    <property type="term" value="F:7SK snRNA binding"/>
    <property type="evidence" value="ECO:0000250"/>
    <property type="project" value="UniProtKB"/>
</dbReference>
<dbReference type="GO" id="GO:0003682">
    <property type="term" value="F:chromatin binding"/>
    <property type="evidence" value="ECO:0007669"/>
    <property type="project" value="Ensembl"/>
</dbReference>
<dbReference type="GO" id="GO:0061575">
    <property type="term" value="F:cyclin-dependent protein serine/threonine kinase activator activity"/>
    <property type="evidence" value="ECO:0000250"/>
    <property type="project" value="UniProtKB"/>
</dbReference>
<dbReference type="GO" id="GO:0140297">
    <property type="term" value="F:DNA-binding transcription factor binding"/>
    <property type="evidence" value="ECO:0007669"/>
    <property type="project" value="Ensembl"/>
</dbReference>
<dbReference type="GO" id="GO:0140693">
    <property type="term" value="F:molecular condensate scaffold activity"/>
    <property type="evidence" value="ECO:0000250"/>
    <property type="project" value="UniProtKB"/>
</dbReference>
<dbReference type="GO" id="GO:0019901">
    <property type="term" value="F:protein kinase binding"/>
    <property type="evidence" value="ECO:0007669"/>
    <property type="project" value="Ensembl"/>
</dbReference>
<dbReference type="GO" id="GO:0070063">
    <property type="term" value="F:RNA polymerase binding"/>
    <property type="evidence" value="ECO:0007669"/>
    <property type="project" value="Ensembl"/>
</dbReference>
<dbReference type="GO" id="GO:0000976">
    <property type="term" value="F:transcription cis-regulatory region binding"/>
    <property type="evidence" value="ECO:0007669"/>
    <property type="project" value="Ensembl"/>
</dbReference>
<dbReference type="GO" id="GO:0051301">
    <property type="term" value="P:cell division"/>
    <property type="evidence" value="ECO:0007669"/>
    <property type="project" value="UniProtKB-KW"/>
</dbReference>
<dbReference type="GO" id="GO:0043923">
    <property type="term" value="P:positive regulation by host of viral transcription"/>
    <property type="evidence" value="ECO:0007669"/>
    <property type="project" value="Ensembl"/>
</dbReference>
<dbReference type="GO" id="GO:0032786">
    <property type="term" value="P:positive regulation of DNA-templated transcription, elongation"/>
    <property type="evidence" value="ECO:0000318"/>
    <property type="project" value="GO_Central"/>
</dbReference>
<dbReference type="GO" id="GO:0045944">
    <property type="term" value="P:positive regulation of transcription by RNA polymerase II"/>
    <property type="evidence" value="ECO:0000318"/>
    <property type="project" value="GO_Central"/>
</dbReference>
<dbReference type="GO" id="GO:0032968">
    <property type="term" value="P:positive regulation of transcription elongation by RNA polymerase II"/>
    <property type="evidence" value="ECO:0000250"/>
    <property type="project" value="UniProtKB"/>
</dbReference>
<dbReference type="CDD" id="cd20595">
    <property type="entry name" value="CYCLIN_CCNT1_rpt1"/>
    <property type="match status" value="1"/>
</dbReference>
<dbReference type="CDD" id="cd20597">
    <property type="entry name" value="CYCLIN_CCNT1_rpt2"/>
    <property type="match status" value="1"/>
</dbReference>
<dbReference type="FunFam" id="1.10.472.10:FF:000004">
    <property type="entry name" value="Cyclin T2"/>
    <property type="match status" value="1"/>
</dbReference>
<dbReference type="FunFam" id="1.10.472.10:FF:000009">
    <property type="entry name" value="cyclin-T2 isoform X1"/>
    <property type="match status" value="1"/>
</dbReference>
<dbReference type="Gene3D" id="1.10.472.10">
    <property type="entry name" value="Cyclin-like"/>
    <property type="match status" value="2"/>
</dbReference>
<dbReference type="InterPro" id="IPR013763">
    <property type="entry name" value="Cyclin-like_dom"/>
</dbReference>
<dbReference type="InterPro" id="IPR036915">
    <property type="entry name" value="Cyclin-like_sf"/>
</dbReference>
<dbReference type="InterPro" id="IPR043198">
    <property type="entry name" value="Cyclin/Ssn8"/>
</dbReference>
<dbReference type="InterPro" id="IPR047320">
    <property type="entry name" value="CYCLIN_CCNT1_rpt2"/>
</dbReference>
<dbReference type="InterPro" id="IPR006671">
    <property type="entry name" value="Cyclin_N"/>
</dbReference>
<dbReference type="PANTHER" id="PTHR10026">
    <property type="entry name" value="CYCLIN"/>
    <property type="match status" value="1"/>
</dbReference>
<dbReference type="Pfam" id="PF00134">
    <property type="entry name" value="Cyclin_N"/>
    <property type="match status" value="1"/>
</dbReference>
<dbReference type="Pfam" id="PF21797">
    <property type="entry name" value="CycT2-like_C"/>
    <property type="match status" value="1"/>
</dbReference>
<dbReference type="SMART" id="SM00385">
    <property type="entry name" value="CYCLIN"/>
    <property type="match status" value="1"/>
</dbReference>
<dbReference type="SUPFAM" id="SSF47954">
    <property type="entry name" value="Cyclin-like"/>
    <property type="match status" value="2"/>
</dbReference>
<gene>
    <name type="primary">CCNT1</name>
</gene>
<organism>
    <name type="scientific">Bos taurus</name>
    <name type="common">Bovine</name>
    <dbReference type="NCBI Taxonomy" id="9913"/>
    <lineage>
        <taxon>Eukaryota</taxon>
        <taxon>Metazoa</taxon>
        <taxon>Chordata</taxon>
        <taxon>Craniata</taxon>
        <taxon>Vertebrata</taxon>
        <taxon>Euteleostomi</taxon>
        <taxon>Mammalia</taxon>
        <taxon>Eutheria</taxon>
        <taxon>Laurasiatheria</taxon>
        <taxon>Artiodactyla</taxon>
        <taxon>Ruminantia</taxon>
        <taxon>Pecora</taxon>
        <taxon>Bovidae</taxon>
        <taxon>Bovinae</taxon>
        <taxon>Bos</taxon>
    </lineage>
</organism>
<accession>Q6T8E9</accession>
<protein>
    <recommendedName>
        <fullName>Cyclin-T1</fullName>
        <shortName>CycT1</shortName>
    </recommendedName>
</protein>
<evidence type="ECO:0000250" key="1">
    <source>
        <dbReference type="UniProtKB" id="O60563"/>
    </source>
</evidence>
<evidence type="ECO:0000255" key="2"/>
<evidence type="ECO:0000256" key="3">
    <source>
        <dbReference type="SAM" id="MobiDB-lite"/>
    </source>
</evidence>
<evidence type="ECO:0000269" key="4">
    <source>
    </source>
</evidence>
<evidence type="ECO:0000305" key="5"/>
<feature type="chain" id="PRO_0000236233" description="Cyclin-T1">
    <location>
        <begin position="1"/>
        <end position="727"/>
    </location>
</feature>
<feature type="region of interest" description="Histidine-rich domain (HRD)" evidence="1">
    <location>
        <begin position="481"/>
        <end position="551"/>
    </location>
</feature>
<feature type="region of interest" description="Disordered" evidence="3">
    <location>
        <begin position="487"/>
        <end position="631"/>
    </location>
</feature>
<feature type="region of interest" description="Disordered" evidence="3">
    <location>
        <begin position="691"/>
        <end position="727"/>
    </location>
</feature>
<feature type="coiled-coil region" evidence="2">
    <location>
        <begin position="389"/>
        <end position="420"/>
    </location>
</feature>
<feature type="short sequence motif" description="Nuclear localization signal" evidence="2">
    <location>
        <begin position="253"/>
        <end position="270"/>
    </location>
</feature>
<feature type="compositionally biased region" description="Basic and acidic residues" evidence="3">
    <location>
        <begin position="487"/>
        <end position="507"/>
    </location>
</feature>
<feature type="compositionally biased region" description="Basic residues" evidence="3">
    <location>
        <begin position="508"/>
        <end position="531"/>
    </location>
</feature>
<feature type="compositionally biased region" description="Low complexity" evidence="3">
    <location>
        <begin position="561"/>
        <end position="571"/>
    </location>
</feature>
<feature type="compositionally biased region" description="Polar residues" evidence="3">
    <location>
        <begin position="616"/>
        <end position="631"/>
    </location>
</feature>
<feature type="compositionally biased region" description="Pro residues" evidence="3">
    <location>
        <begin position="711"/>
        <end position="727"/>
    </location>
</feature>
<feature type="modified residue" description="Phosphoserine" evidence="1">
    <location>
        <position position="117"/>
    </location>
</feature>
<feature type="modified residue" description="Phosphoserine" evidence="1">
    <location>
        <position position="389"/>
    </location>
</feature>
<feature type="modified residue" description="N6-acetyllysine" evidence="1">
    <location>
        <position position="391"/>
    </location>
</feature>
<feature type="modified residue" description="ADP-ribosylserine" evidence="1">
    <location>
        <position position="417"/>
    </location>
</feature>
<feature type="modified residue" description="ADP-ribosylserine" evidence="1">
    <location>
        <position position="475"/>
    </location>
</feature>
<feature type="modified residue" description="N6-(ADP-ribosyl)lysine" evidence="1">
    <location>
        <position position="486"/>
    </location>
</feature>
<feature type="modified residue" description="ADP-ribosylhistidine" evidence="1">
    <location>
        <position position="488"/>
    </location>
</feature>
<feature type="modified residue" description="Phosphoserine" evidence="1">
    <location>
        <position position="496"/>
    </location>
</feature>
<feature type="modified residue" description="Phosphoserine" evidence="1">
    <location>
        <position position="500"/>
    </location>
</feature>
<feature type="modified residue" description="ADP-ribosylhistidine" evidence="1">
    <location>
        <position position="531"/>
    </location>
</feature>
<feature type="modified residue" description="ADP-ribosylserine" evidence="1">
    <location>
        <position position="532"/>
    </location>
</feature>
<feature type="modified residue" description="ADP-ribosylserine" evidence="1">
    <location>
        <position position="550"/>
    </location>
</feature>
<feature type="modified residue" description="ADP-ribosylserine" evidence="1">
    <location>
        <position position="553"/>
    </location>
</feature>
<feature type="modified residue" description="ADP-ribosylhistidine" evidence="1">
    <location>
        <position position="557"/>
    </location>
</feature>
<feature type="modified residue" description="ADP-ribosylserine" evidence="1">
    <location>
        <position position="564"/>
    </location>
</feature>
<feature type="modified residue" description="Phosphoserine" evidence="1">
    <location>
        <position position="565"/>
    </location>
</feature>
<feature type="cross-link" description="Glycyl lysine isopeptide (Lys-Gly) (interchain with G-Cter in SUMO2)" evidence="1">
    <location>
        <position position="343"/>
    </location>
</feature>
<feature type="cross-link" description="Glycyl lysine isopeptide (Lys-Gly) (interchain with G-Cter in SUMO2)" evidence="1">
    <location>
        <position position="416"/>
    </location>
</feature>
<feature type="cross-link" description="Glycyl lysine isopeptide (Lys-Gly) (interchain with G-Cter in SUMO2)" evidence="1">
    <location>
        <position position="482"/>
    </location>
</feature>
<comment type="function">
    <text evidence="1">Regulatory subunit of the cyclin-dependent kinase pair (CDK9/cyclin-T1) complex, also called positive transcription elongation factor B (P-TEFb), which facilitates the transition from abortive to productive elongation by phosphorylating the CTD (C-terminal domain) of the large subunit of RNA polymerase II (RNA Pol II). Required to activate the protein kinase activity of CDK9: acts by mediating formation of liquid-liquid phase separation (LLPS) that enhances binding of P-TEFb to the CTD of RNA Pol II.</text>
</comment>
<comment type="subunit">
    <text evidence="1">Cyclin-T1 is the predominant cyclin that associates with CDK9 to form a heterodimer called P-TEFb (By similarity). P-TEFb forms a complex with AFF4/AF5Q31 (By similarity). Component of a complex which is at least composed of HTATSF1/Tat-SF1, P-TEFb complex, RNA pol II, SUPT5H, and NCL/nucleolin (By similarity). Component of the 7SK snRNP complex at least composed of P-TEFb (composed of CDK9 and CCNT1/cyclin-T1), HEXIM1, HEXIM2, BCDIN3, SART3 proteins and 7SK and U6 snRNAs (By similarity). Interacts (via central region) with ZMYND8 (via N-terminus); the interaction is direct and the association appears to occur between homodimeric ZMYND8 and the activated form of the P-TEFb complex (By similarity). Interacts with BRD4, targets chromatin binding (By similarity). Interacts with JMJD6 (By similarity). Interacts with MDFIC (By similarity). Interacts with HSF1. Interacts with HTATSF1 (By similarity). Interacts with TBX21 (By similarity).</text>
</comment>
<comment type="subunit">
    <text evidence="4">(Microbial infection) Binds to BIV Tat, however Tat binds TAR RNA in a Cyc-T1-independent mode.</text>
</comment>
<comment type="subcellular location">
    <subcellularLocation>
        <location evidence="1">Nucleus</location>
    </subcellularLocation>
</comment>
<comment type="domain">
    <text evidence="1">The histidine-rich domain (HRD) region is intrinsically disordered and promotes the formation of phase-separated liquid droplets that enhance binding of the P-TEFb complex to the CTD (C-terminal domain) of the large subunit of RNA polymerase II (RNA Pol II).</text>
</comment>
<comment type="PTM">
    <text evidence="1">ADP-ribosylation on serine residues by PARP1 in response to DNA damage disrupts the phase separation activity of CCNT1, thereby preventing activation of CDK9.</text>
</comment>
<comment type="similarity">
    <text evidence="5">Belongs to the cyclin family. Cyclin C subfamily.</text>
</comment>
<keyword id="KW-0007">Acetylation</keyword>
<keyword id="KW-0013">ADP-ribosylation</keyword>
<keyword id="KW-0131">Cell cycle</keyword>
<keyword id="KW-0132">Cell division</keyword>
<keyword id="KW-0175">Coiled coil</keyword>
<keyword id="KW-0195">Cyclin</keyword>
<keyword id="KW-0945">Host-virus interaction</keyword>
<keyword id="KW-1017">Isopeptide bond</keyword>
<keyword id="KW-0539">Nucleus</keyword>
<keyword id="KW-0597">Phosphoprotein</keyword>
<keyword id="KW-1185">Reference proteome</keyword>
<keyword id="KW-0804">Transcription</keyword>
<keyword id="KW-0805">Transcription regulation</keyword>
<keyword id="KW-0832">Ubl conjugation</keyword>
<proteinExistence type="evidence at protein level"/>
<reference key="1">
    <citation type="journal article" date="2004" name="Virology">
        <title>Evidence for conformational flexibility in the Tat-TAR recognition motif of cyclin T1.</title>
        <authorList>
            <person name="Das C."/>
            <person name="Edgcomb S.P."/>
            <person name="Peteranderl R."/>
            <person name="Chen L."/>
            <person name="Frankel A.D."/>
        </authorList>
    </citation>
    <scope>NUCLEOTIDE SEQUENCE [MRNA]</scope>
    <scope>INTERACTION WITH BIV TAT (MICROBIAL INFECTION)</scope>
</reference>